<proteinExistence type="inferred from homology"/>
<evidence type="ECO:0000255" key="1">
    <source>
        <dbReference type="HAMAP-Rule" id="MF_00161"/>
    </source>
</evidence>
<sequence>MNKINLKNFYLNLVIILVVFIFDRTTKLYILKLAEVETSVDIYITPFLNLFLIWNKGIAFGLFSIDGSVIYNSITILIGLIIIAIIFMMLKNDNIQRYFFALIAGGAFGNFYDRIVYTAVPDFIDLHFYGFHWFVFNVADIFITIGVFCLILVELFFNNKKTNEKN</sequence>
<gene>
    <name evidence="1" type="primary">lspA</name>
    <name type="ordered locus">SAR11_0157</name>
</gene>
<feature type="chain" id="PRO_0000289407" description="Lipoprotein signal peptidase">
    <location>
        <begin position="1"/>
        <end position="166"/>
    </location>
</feature>
<feature type="transmembrane region" description="Helical" evidence="1">
    <location>
        <begin position="11"/>
        <end position="31"/>
    </location>
</feature>
<feature type="transmembrane region" description="Helical" evidence="1">
    <location>
        <begin position="42"/>
        <end position="62"/>
    </location>
</feature>
<feature type="transmembrane region" description="Helical" evidence="1">
    <location>
        <begin position="69"/>
        <end position="89"/>
    </location>
</feature>
<feature type="transmembrane region" description="Helical" evidence="1">
    <location>
        <begin position="99"/>
        <end position="119"/>
    </location>
</feature>
<feature type="transmembrane region" description="Helical" evidence="1">
    <location>
        <begin position="133"/>
        <end position="153"/>
    </location>
</feature>
<feature type="active site" evidence="1">
    <location>
        <position position="122"/>
    </location>
</feature>
<feature type="active site" evidence="1">
    <location>
        <position position="140"/>
    </location>
</feature>
<protein>
    <recommendedName>
        <fullName evidence="1">Lipoprotein signal peptidase</fullName>
        <ecNumber evidence="1">3.4.23.36</ecNumber>
    </recommendedName>
    <alternativeName>
        <fullName evidence="1">Prolipoprotein signal peptidase</fullName>
    </alternativeName>
    <alternativeName>
        <fullName evidence="1">Signal peptidase II</fullName>
        <shortName evidence="1">SPase II</shortName>
    </alternativeName>
</protein>
<name>LSPA_PELUB</name>
<reference key="1">
    <citation type="journal article" date="2005" name="Science">
        <title>Genome streamlining in a cosmopolitan oceanic bacterium.</title>
        <authorList>
            <person name="Giovannoni S.J."/>
            <person name="Tripp H.J."/>
            <person name="Givan S."/>
            <person name="Podar M."/>
            <person name="Vergin K.L."/>
            <person name="Baptista D."/>
            <person name="Bibbs L."/>
            <person name="Eads J."/>
            <person name="Richardson T.H."/>
            <person name="Noordewier M."/>
            <person name="Rappe M.S."/>
            <person name="Short J.M."/>
            <person name="Carrington J.C."/>
            <person name="Mathur E.J."/>
        </authorList>
    </citation>
    <scope>NUCLEOTIDE SEQUENCE [LARGE SCALE GENOMIC DNA]</scope>
    <source>
        <strain>HTCC1062</strain>
    </source>
</reference>
<organism>
    <name type="scientific">Pelagibacter ubique (strain HTCC1062)</name>
    <dbReference type="NCBI Taxonomy" id="335992"/>
    <lineage>
        <taxon>Bacteria</taxon>
        <taxon>Pseudomonadati</taxon>
        <taxon>Pseudomonadota</taxon>
        <taxon>Alphaproteobacteria</taxon>
        <taxon>Candidatus Pelagibacterales</taxon>
        <taxon>Candidatus Pelagibacteraceae</taxon>
        <taxon>Candidatus Pelagibacter</taxon>
    </lineage>
</organism>
<accession>Q4FPB0</accession>
<comment type="function">
    <text evidence="1">This protein specifically catalyzes the removal of signal peptides from prolipoproteins.</text>
</comment>
<comment type="catalytic activity">
    <reaction evidence="1">
        <text>Release of signal peptides from bacterial membrane prolipoproteins. Hydrolyzes -Xaa-Yaa-Zaa-|-(S,diacylglyceryl)Cys-, in which Xaa is hydrophobic (preferably Leu), and Yaa (Ala or Ser) and Zaa (Gly or Ala) have small, neutral side chains.</text>
        <dbReference type="EC" id="3.4.23.36"/>
    </reaction>
</comment>
<comment type="pathway">
    <text evidence="1">Protein modification; lipoprotein biosynthesis (signal peptide cleavage).</text>
</comment>
<comment type="subcellular location">
    <subcellularLocation>
        <location evidence="1">Cell inner membrane</location>
        <topology evidence="1">Multi-pass membrane protein</topology>
    </subcellularLocation>
</comment>
<comment type="similarity">
    <text evidence="1">Belongs to the peptidase A8 family.</text>
</comment>
<dbReference type="EC" id="3.4.23.36" evidence="1"/>
<dbReference type="EMBL" id="CP000084">
    <property type="protein sequence ID" value="AAZ20979.1"/>
    <property type="molecule type" value="Genomic_DNA"/>
</dbReference>
<dbReference type="RefSeq" id="WP_011281507.1">
    <property type="nucleotide sequence ID" value="NC_007205.1"/>
</dbReference>
<dbReference type="SMR" id="Q4FPB0"/>
<dbReference type="STRING" id="335992.SAR11_0157"/>
<dbReference type="GeneID" id="66294657"/>
<dbReference type="KEGG" id="pub:SAR11_0157"/>
<dbReference type="eggNOG" id="COG0597">
    <property type="taxonomic scope" value="Bacteria"/>
</dbReference>
<dbReference type="HOGENOM" id="CLU_083252_4_3_5"/>
<dbReference type="OrthoDB" id="9810259at2"/>
<dbReference type="UniPathway" id="UPA00665"/>
<dbReference type="Proteomes" id="UP000002528">
    <property type="component" value="Chromosome"/>
</dbReference>
<dbReference type="GO" id="GO:0005886">
    <property type="term" value="C:plasma membrane"/>
    <property type="evidence" value="ECO:0007669"/>
    <property type="project" value="UniProtKB-SubCell"/>
</dbReference>
<dbReference type="GO" id="GO:0004190">
    <property type="term" value="F:aspartic-type endopeptidase activity"/>
    <property type="evidence" value="ECO:0007669"/>
    <property type="project" value="UniProtKB-UniRule"/>
</dbReference>
<dbReference type="GO" id="GO:0006508">
    <property type="term" value="P:proteolysis"/>
    <property type="evidence" value="ECO:0007669"/>
    <property type="project" value="UniProtKB-KW"/>
</dbReference>
<dbReference type="HAMAP" id="MF_00161">
    <property type="entry name" value="LspA"/>
    <property type="match status" value="1"/>
</dbReference>
<dbReference type="InterPro" id="IPR001872">
    <property type="entry name" value="Peptidase_A8"/>
</dbReference>
<dbReference type="NCBIfam" id="TIGR00077">
    <property type="entry name" value="lspA"/>
    <property type="match status" value="1"/>
</dbReference>
<dbReference type="PANTHER" id="PTHR33695">
    <property type="entry name" value="LIPOPROTEIN SIGNAL PEPTIDASE"/>
    <property type="match status" value="1"/>
</dbReference>
<dbReference type="PANTHER" id="PTHR33695:SF1">
    <property type="entry name" value="LIPOPROTEIN SIGNAL PEPTIDASE"/>
    <property type="match status" value="1"/>
</dbReference>
<dbReference type="Pfam" id="PF01252">
    <property type="entry name" value="Peptidase_A8"/>
    <property type="match status" value="1"/>
</dbReference>
<dbReference type="PRINTS" id="PR00781">
    <property type="entry name" value="LIPOSIGPTASE"/>
</dbReference>
<dbReference type="PROSITE" id="PS00855">
    <property type="entry name" value="SPASE_II"/>
    <property type="match status" value="1"/>
</dbReference>
<keyword id="KW-0064">Aspartyl protease</keyword>
<keyword id="KW-0997">Cell inner membrane</keyword>
<keyword id="KW-1003">Cell membrane</keyword>
<keyword id="KW-0378">Hydrolase</keyword>
<keyword id="KW-0472">Membrane</keyword>
<keyword id="KW-0645">Protease</keyword>
<keyword id="KW-1185">Reference proteome</keyword>
<keyword id="KW-0812">Transmembrane</keyword>
<keyword id="KW-1133">Transmembrane helix</keyword>